<gene>
    <name type="primary">nifW</name>
</gene>
<proteinExistence type="inferred from homology"/>
<feature type="chain" id="PRO_0000219525" description="Nitrogenase-stabilizing/protective protein NifW">
    <location>
        <begin position="1"/>
        <end position="107"/>
    </location>
</feature>
<comment type="function">
    <text evidence="1">May protect the nitrogenase Fe-Mo protein from oxidative damage.</text>
</comment>
<comment type="subunit">
    <text evidence="1">Homotrimer; associates with NifD.</text>
</comment>
<comment type="similarity">
    <text evidence="2">Belongs to the NifW family.</text>
</comment>
<reference key="1">
    <citation type="journal article" date="1993" name="Biochim. Biophys. Acta">
        <title>Identification of a nifW-like gene in Azospirillum brasilense.</title>
        <authorList>
            <person name="Milcamps A."/>
            <person name="Keyers V."/>
            <person name="Vanderleyden J."/>
        </authorList>
    </citation>
    <scope>NUCLEOTIDE SEQUENCE [GENOMIC DNA]</scope>
    <source>
        <strain>ATCC 29145 / DSM 1690 / IMET 11303 / Sp7</strain>
    </source>
</reference>
<name>NIFW_AZOBR</name>
<organism>
    <name type="scientific">Azospirillum brasilense</name>
    <dbReference type="NCBI Taxonomy" id="192"/>
    <lineage>
        <taxon>Bacteria</taxon>
        <taxon>Pseudomonadati</taxon>
        <taxon>Pseudomonadota</taxon>
        <taxon>Alphaproteobacteria</taxon>
        <taxon>Rhodospirillales</taxon>
        <taxon>Azospirillaceae</taxon>
        <taxon>Azospirillum</taxon>
    </lineage>
</organism>
<dbReference type="EMBL" id="Z21704">
    <property type="protein sequence ID" value="CAA79808.1"/>
    <property type="molecule type" value="Genomic_DNA"/>
</dbReference>
<dbReference type="PIR" id="S33762">
    <property type="entry name" value="S33762"/>
</dbReference>
<dbReference type="SMR" id="Q07559"/>
<dbReference type="GO" id="GO:0009399">
    <property type="term" value="P:nitrogen fixation"/>
    <property type="evidence" value="ECO:0007669"/>
    <property type="project" value="UniProtKB-UniRule"/>
</dbReference>
<dbReference type="HAMAP" id="MF_00529">
    <property type="entry name" value="NifW"/>
    <property type="match status" value="1"/>
</dbReference>
<dbReference type="InterPro" id="IPR004893">
    <property type="entry name" value="NifW"/>
</dbReference>
<dbReference type="Pfam" id="PF03206">
    <property type="entry name" value="NifW"/>
    <property type="match status" value="1"/>
</dbReference>
<dbReference type="PIRSF" id="PIRSF005790">
    <property type="entry name" value="NifW"/>
    <property type="match status" value="1"/>
</dbReference>
<sequence length="107" mass="12347">MSFKDDLEDLETAEDFLRFLGVTYEQRVVNVNRLHILQRFQDYLSADTGMEGLDDEGMAARYSAHLERAYQDFVASNAIAEKTFKVHQEEARKMADRFVPLDALLPT</sequence>
<accession>Q07559</accession>
<evidence type="ECO:0000250" key="1"/>
<evidence type="ECO:0000305" key="2"/>
<protein>
    <recommendedName>
        <fullName>Nitrogenase-stabilizing/protective protein NifW</fullName>
    </recommendedName>
</protein>
<keyword id="KW-0535">Nitrogen fixation</keyword>